<keyword id="KW-0025">Alternative splicing</keyword>
<keyword id="KW-0238">DNA-binding</keyword>
<keyword id="KW-1017">Isopeptide bond</keyword>
<keyword id="KW-0479">Metal-binding</keyword>
<keyword id="KW-0539">Nucleus</keyword>
<keyword id="KW-1267">Proteomics identification</keyword>
<keyword id="KW-1185">Reference proteome</keyword>
<keyword id="KW-0677">Repeat</keyword>
<keyword id="KW-0678">Repressor</keyword>
<keyword id="KW-0804">Transcription</keyword>
<keyword id="KW-0805">Transcription regulation</keyword>
<keyword id="KW-0832">Ubl conjugation</keyword>
<keyword id="KW-0862">Zinc</keyword>
<keyword id="KW-0863">Zinc-finger</keyword>
<name>KLF8_HUMAN</name>
<accession>O95600</accession>
<accession>B4DJN3</accession>
<accession>E7EQQ8</accession>
<accession>L0R3U8</accession>
<accession>L0R4U2</accession>
<accession>Q2M246</accession>
<accession>Q59GV5</accession>
<accession>Q5HYQ5</accession>
<accession>Q5JXP7</accession>
<accession>Q6MZJ7</accession>
<accession>Q9UGC4</accession>
<gene>
    <name type="primary">KLF8</name>
    <name type="synonym">BKLF3</name>
    <name type="synonym">ZNF741</name>
</gene>
<comment type="function">
    <text evidence="3 4 5">Transcriptional repressor and activator. Binds to CACCC-boxes promoter elements. Also binds the GT-box of cyclin D1 promoter and mediates cell cycle progression at G(1) phase as a downstream target of focal adhesion kinase (FAK).</text>
</comment>
<comment type="subunit">
    <text evidence="3 5">Interacts with corepressor CtBP2. Interacts with PIAS1, PIAS2, and PIAS4; the interaction with each ligase sumoylates KLF8.</text>
</comment>
<comment type="subcellular location">
    <subcellularLocation>
        <location evidence="5">Nucleus</location>
    </subcellularLocation>
</comment>
<comment type="alternative products">
    <event type="alternative splicing"/>
    <isoform>
        <id>O95600-1</id>
        <name>1</name>
        <sequence type="displayed"/>
    </isoform>
    <isoform>
        <id>O95600-3</id>
        <name>2</name>
        <sequence type="described" ref="VSP_045460"/>
    </isoform>
    <isoform>
        <id>O95600-4</id>
        <name>3</name>
        <sequence type="described" ref="VSP_047480 VSP_045460"/>
    </isoform>
    <isoform>
        <id>O95600-5</id>
        <name>4</name>
        <sequence type="described" ref="VSP_047481"/>
    </isoform>
</comment>
<comment type="tissue specificity">
    <text evidence="3">Ubiquitous.</text>
</comment>
<comment type="domain">
    <text evidence="6">The 9aaTAD motif is a transactivation domain present in a large number of yeast and animal transcription factors. In KLF8, the motif is inactive.</text>
</comment>
<comment type="PTM">
    <text evidence="5">Sumoylation at Lys-67 represses transcriptional activity and reduces cell cycle progression into the G(1) phase. Has no effect on subcellular location.</text>
</comment>
<comment type="similarity">
    <text evidence="9">Belongs to the Sp1 C2H2-type zinc-finger protein family.</text>
</comment>
<sequence length="359" mass="39314">MVDMDKLINNLEVQLNSEGGSMQVFKQVTASVRNRDPPEIEYRSNMTSPTLLDANPMENPALFNDIKIEPPEELLASDFSLPQVEPVDLSFHKPKAPLQPASMLQAPIRPPKPQSSPQTLVVSTSTSDMSTSANIPTVLTPGSVLTSSQSTGSQQILHVIHTIPSVSLPNKMGGLKTIPVVVQSLPMVYTTLPADGGPAAITVPLIGGDGKNAGSVKVDPTSMSPLEIPSDSEESTIESGSSALQSLQGLQQEPAAMAQMQGEESLDLKRRRIHQCDFAGCSKVYTKSSHLKAHRRIHTGEKPYKCTWDGCSWKFARSDELTRHFRKHTGIKPFRCTDCNRSFSRSDHLSLHRRRHDTM</sequence>
<organism>
    <name type="scientific">Homo sapiens</name>
    <name type="common">Human</name>
    <dbReference type="NCBI Taxonomy" id="9606"/>
    <lineage>
        <taxon>Eukaryota</taxon>
        <taxon>Metazoa</taxon>
        <taxon>Chordata</taxon>
        <taxon>Craniata</taxon>
        <taxon>Vertebrata</taxon>
        <taxon>Euteleostomi</taxon>
        <taxon>Mammalia</taxon>
        <taxon>Eutheria</taxon>
        <taxon>Euarchontoglires</taxon>
        <taxon>Primates</taxon>
        <taxon>Haplorrhini</taxon>
        <taxon>Catarrhini</taxon>
        <taxon>Hominidae</taxon>
        <taxon>Homo</taxon>
    </lineage>
</organism>
<reference key="1">
    <citation type="submission" date="1995-06" db="EMBL/GenBank/DDBJ databases">
        <authorList>
            <person name="Gorski J.L."/>
            <person name="MacDonald M."/>
            <person name="Vananthwerp M."/>
            <person name="Burright E.N."/>
            <person name="Bialecki M."/>
        </authorList>
    </citation>
    <scope>NUCLEOTIDE SEQUENCE [MRNA] (ISOFORM 1)</scope>
</reference>
<reference key="2">
    <citation type="journal article" date="2013" name="FASEB J.">
        <title>Shaking the family tree: Identification of novel and biologically active alternatively spliced isoforms across the KLF family of transcription factors.</title>
        <authorList>
            <person name="Camacho-Vanegas O."/>
            <person name="Till J."/>
            <person name="Miranda-Lorenzo I."/>
            <person name="Ozturk B."/>
            <person name="Camacho S.C."/>
            <person name="Martignetti J.A."/>
        </authorList>
    </citation>
    <scope>NUCLEOTIDE SEQUENCE [MRNA] (ISOFORMS 2; 3 AND 4)</scope>
    <scope>ALTERNATIVE SPLICING</scope>
</reference>
<reference key="3">
    <citation type="journal article" date="2004" name="Nat. Genet.">
        <title>Complete sequencing and characterization of 21,243 full-length human cDNAs.</title>
        <authorList>
            <person name="Ota T."/>
            <person name="Suzuki Y."/>
            <person name="Nishikawa T."/>
            <person name="Otsuki T."/>
            <person name="Sugiyama T."/>
            <person name="Irie R."/>
            <person name="Wakamatsu A."/>
            <person name="Hayashi K."/>
            <person name="Sato H."/>
            <person name="Nagai K."/>
            <person name="Kimura K."/>
            <person name="Makita H."/>
            <person name="Sekine M."/>
            <person name="Obayashi M."/>
            <person name="Nishi T."/>
            <person name="Shibahara T."/>
            <person name="Tanaka T."/>
            <person name="Ishii S."/>
            <person name="Yamamoto J."/>
            <person name="Saito K."/>
            <person name="Kawai Y."/>
            <person name="Isono Y."/>
            <person name="Nakamura Y."/>
            <person name="Nagahari K."/>
            <person name="Murakami K."/>
            <person name="Yasuda T."/>
            <person name="Iwayanagi T."/>
            <person name="Wagatsuma M."/>
            <person name="Shiratori A."/>
            <person name="Sudo H."/>
            <person name="Hosoiri T."/>
            <person name="Kaku Y."/>
            <person name="Kodaira H."/>
            <person name="Kondo H."/>
            <person name="Sugawara M."/>
            <person name="Takahashi M."/>
            <person name="Kanda K."/>
            <person name="Yokoi T."/>
            <person name="Furuya T."/>
            <person name="Kikkawa E."/>
            <person name="Omura Y."/>
            <person name="Abe K."/>
            <person name="Kamihara K."/>
            <person name="Katsuta N."/>
            <person name="Sato K."/>
            <person name="Tanikawa M."/>
            <person name="Yamazaki M."/>
            <person name="Ninomiya K."/>
            <person name="Ishibashi T."/>
            <person name="Yamashita H."/>
            <person name="Murakawa K."/>
            <person name="Fujimori K."/>
            <person name="Tanai H."/>
            <person name="Kimata M."/>
            <person name="Watanabe M."/>
            <person name="Hiraoka S."/>
            <person name="Chiba Y."/>
            <person name="Ishida S."/>
            <person name="Ono Y."/>
            <person name="Takiguchi S."/>
            <person name="Watanabe S."/>
            <person name="Yosida M."/>
            <person name="Hotuta T."/>
            <person name="Kusano J."/>
            <person name="Kanehori K."/>
            <person name="Takahashi-Fujii A."/>
            <person name="Hara H."/>
            <person name="Tanase T.-O."/>
            <person name="Nomura Y."/>
            <person name="Togiya S."/>
            <person name="Komai F."/>
            <person name="Hara R."/>
            <person name="Takeuchi K."/>
            <person name="Arita M."/>
            <person name="Imose N."/>
            <person name="Musashino K."/>
            <person name="Yuuki H."/>
            <person name="Oshima A."/>
            <person name="Sasaki N."/>
            <person name="Aotsuka S."/>
            <person name="Yoshikawa Y."/>
            <person name="Matsunawa H."/>
            <person name="Ichihara T."/>
            <person name="Shiohata N."/>
            <person name="Sano S."/>
            <person name="Moriya S."/>
            <person name="Momiyama H."/>
            <person name="Satoh N."/>
            <person name="Takami S."/>
            <person name="Terashima Y."/>
            <person name="Suzuki O."/>
            <person name="Nakagawa S."/>
            <person name="Senoh A."/>
            <person name="Mizoguchi H."/>
            <person name="Goto Y."/>
            <person name="Shimizu F."/>
            <person name="Wakebe H."/>
            <person name="Hishigaki H."/>
            <person name="Watanabe T."/>
            <person name="Sugiyama A."/>
            <person name="Takemoto M."/>
            <person name="Kawakami B."/>
            <person name="Yamazaki M."/>
            <person name="Watanabe K."/>
            <person name="Kumagai A."/>
            <person name="Itakura S."/>
            <person name="Fukuzumi Y."/>
            <person name="Fujimori Y."/>
            <person name="Komiyama M."/>
            <person name="Tashiro H."/>
            <person name="Tanigami A."/>
            <person name="Fujiwara T."/>
            <person name="Ono T."/>
            <person name="Yamada K."/>
            <person name="Fujii Y."/>
            <person name="Ozaki K."/>
            <person name="Hirao M."/>
            <person name="Ohmori Y."/>
            <person name="Kawabata A."/>
            <person name="Hikiji T."/>
            <person name="Kobatake N."/>
            <person name="Inagaki H."/>
            <person name="Ikema Y."/>
            <person name="Okamoto S."/>
            <person name="Okitani R."/>
            <person name="Kawakami T."/>
            <person name="Noguchi S."/>
            <person name="Itoh T."/>
            <person name="Shigeta K."/>
            <person name="Senba T."/>
            <person name="Matsumura K."/>
            <person name="Nakajima Y."/>
            <person name="Mizuno T."/>
            <person name="Morinaga M."/>
            <person name="Sasaki M."/>
            <person name="Togashi T."/>
            <person name="Oyama M."/>
            <person name="Hata H."/>
            <person name="Watanabe M."/>
            <person name="Komatsu T."/>
            <person name="Mizushima-Sugano J."/>
            <person name="Satoh T."/>
            <person name="Shirai Y."/>
            <person name="Takahashi Y."/>
            <person name="Nakagawa K."/>
            <person name="Okumura K."/>
            <person name="Nagase T."/>
            <person name="Nomura N."/>
            <person name="Kikuchi H."/>
            <person name="Masuho Y."/>
            <person name="Yamashita R."/>
            <person name="Nakai K."/>
            <person name="Yada T."/>
            <person name="Nakamura Y."/>
            <person name="Ohara O."/>
            <person name="Isogai T."/>
            <person name="Sugano S."/>
        </authorList>
    </citation>
    <scope>NUCLEOTIDE SEQUENCE [LARGE SCALE MRNA] (ISOFORM 2)</scope>
    <source>
        <tissue>Thalamus</tissue>
    </source>
</reference>
<reference key="4">
    <citation type="submission" date="2005-03" db="EMBL/GenBank/DDBJ databases">
        <authorList>
            <person name="Totoki Y."/>
            <person name="Toyoda A."/>
            <person name="Takeda T."/>
            <person name="Sakaki Y."/>
            <person name="Tanaka A."/>
            <person name="Yokoyama S."/>
            <person name="Ohara O."/>
            <person name="Nagase T."/>
            <person name="Kikuno R.F."/>
        </authorList>
    </citation>
    <scope>NUCLEOTIDE SEQUENCE [LARGE SCALE MRNA] (ISOFORM 1)</scope>
    <source>
        <tissue>Brain</tissue>
    </source>
</reference>
<reference key="5">
    <citation type="journal article" date="2007" name="BMC Genomics">
        <title>The full-ORF clone resource of the German cDNA consortium.</title>
        <authorList>
            <person name="Bechtel S."/>
            <person name="Rosenfelder H."/>
            <person name="Duda A."/>
            <person name="Schmidt C.P."/>
            <person name="Ernst U."/>
            <person name="Wellenreuther R."/>
            <person name="Mehrle A."/>
            <person name="Schuster C."/>
            <person name="Bahr A."/>
            <person name="Bloecker H."/>
            <person name="Heubner D."/>
            <person name="Hoerlein A."/>
            <person name="Michel G."/>
            <person name="Wedler H."/>
            <person name="Koehrer K."/>
            <person name="Ottenwaelder B."/>
            <person name="Poustka A."/>
            <person name="Wiemann S."/>
            <person name="Schupp I."/>
        </authorList>
    </citation>
    <scope>NUCLEOTIDE SEQUENCE [LARGE SCALE MRNA] (ISOFORM 1)</scope>
    <source>
        <tissue>Uterus</tissue>
    </source>
</reference>
<reference key="6">
    <citation type="journal article" date="2005" name="Nature">
        <title>The DNA sequence of the human X chromosome.</title>
        <authorList>
            <person name="Ross M.T."/>
            <person name="Grafham D.V."/>
            <person name="Coffey A.J."/>
            <person name="Scherer S."/>
            <person name="McLay K."/>
            <person name="Muzny D."/>
            <person name="Platzer M."/>
            <person name="Howell G.R."/>
            <person name="Burrows C."/>
            <person name="Bird C.P."/>
            <person name="Frankish A."/>
            <person name="Lovell F.L."/>
            <person name="Howe K.L."/>
            <person name="Ashurst J.L."/>
            <person name="Fulton R.S."/>
            <person name="Sudbrak R."/>
            <person name="Wen G."/>
            <person name="Jones M.C."/>
            <person name="Hurles M.E."/>
            <person name="Andrews T.D."/>
            <person name="Scott C.E."/>
            <person name="Searle S."/>
            <person name="Ramser J."/>
            <person name="Whittaker A."/>
            <person name="Deadman R."/>
            <person name="Carter N.P."/>
            <person name="Hunt S.E."/>
            <person name="Chen R."/>
            <person name="Cree A."/>
            <person name="Gunaratne P."/>
            <person name="Havlak P."/>
            <person name="Hodgson A."/>
            <person name="Metzker M.L."/>
            <person name="Richards S."/>
            <person name="Scott G."/>
            <person name="Steffen D."/>
            <person name="Sodergren E."/>
            <person name="Wheeler D.A."/>
            <person name="Worley K.C."/>
            <person name="Ainscough R."/>
            <person name="Ambrose K.D."/>
            <person name="Ansari-Lari M.A."/>
            <person name="Aradhya S."/>
            <person name="Ashwell R.I."/>
            <person name="Babbage A.K."/>
            <person name="Bagguley C.L."/>
            <person name="Ballabio A."/>
            <person name="Banerjee R."/>
            <person name="Barker G.E."/>
            <person name="Barlow K.F."/>
            <person name="Barrett I.P."/>
            <person name="Bates K.N."/>
            <person name="Beare D.M."/>
            <person name="Beasley H."/>
            <person name="Beasley O."/>
            <person name="Beck A."/>
            <person name="Bethel G."/>
            <person name="Blechschmidt K."/>
            <person name="Brady N."/>
            <person name="Bray-Allen S."/>
            <person name="Bridgeman A.M."/>
            <person name="Brown A.J."/>
            <person name="Brown M.J."/>
            <person name="Bonnin D."/>
            <person name="Bruford E.A."/>
            <person name="Buhay C."/>
            <person name="Burch P."/>
            <person name="Burford D."/>
            <person name="Burgess J."/>
            <person name="Burrill W."/>
            <person name="Burton J."/>
            <person name="Bye J.M."/>
            <person name="Carder C."/>
            <person name="Carrel L."/>
            <person name="Chako J."/>
            <person name="Chapman J.C."/>
            <person name="Chavez D."/>
            <person name="Chen E."/>
            <person name="Chen G."/>
            <person name="Chen Y."/>
            <person name="Chen Z."/>
            <person name="Chinault C."/>
            <person name="Ciccodicola A."/>
            <person name="Clark S.Y."/>
            <person name="Clarke G."/>
            <person name="Clee C.M."/>
            <person name="Clegg S."/>
            <person name="Clerc-Blankenburg K."/>
            <person name="Clifford K."/>
            <person name="Cobley V."/>
            <person name="Cole C.G."/>
            <person name="Conquer J.S."/>
            <person name="Corby N."/>
            <person name="Connor R.E."/>
            <person name="David R."/>
            <person name="Davies J."/>
            <person name="Davis C."/>
            <person name="Davis J."/>
            <person name="Delgado O."/>
            <person name="Deshazo D."/>
            <person name="Dhami P."/>
            <person name="Ding Y."/>
            <person name="Dinh H."/>
            <person name="Dodsworth S."/>
            <person name="Draper H."/>
            <person name="Dugan-Rocha S."/>
            <person name="Dunham A."/>
            <person name="Dunn M."/>
            <person name="Durbin K.J."/>
            <person name="Dutta I."/>
            <person name="Eades T."/>
            <person name="Ellwood M."/>
            <person name="Emery-Cohen A."/>
            <person name="Errington H."/>
            <person name="Evans K.L."/>
            <person name="Faulkner L."/>
            <person name="Francis F."/>
            <person name="Frankland J."/>
            <person name="Fraser A.E."/>
            <person name="Galgoczy P."/>
            <person name="Gilbert J."/>
            <person name="Gill R."/>
            <person name="Gloeckner G."/>
            <person name="Gregory S.G."/>
            <person name="Gribble S."/>
            <person name="Griffiths C."/>
            <person name="Grocock R."/>
            <person name="Gu Y."/>
            <person name="Gwilliam R."/>
            <person name="Hamilton C."/>
            <person name="Hart E.A."/>
            <person name="Hawes A."/>
            <person name="Heath P.D."/>
            <person name="Heitmann K."/>
            <person name="Hennig S."/>
            <person name="Hernandez J."/>
            <person name="Hinzmann B."/>
            <person name="Ho S."/>
            <person name="Hoffs M."/>
            <person name="Howden P.J."/>
            <person name="Huckle E.J."/>
            <person name="Hume J."/>
            <person name="Hunt P.J."/>
            <person name="Hunt A.R."/>
            <person name="Isherwood J."/>
            <person name="Jacob L."/>
            <person name="Johnson D."/>
            <person name="Jones S."/>
            <person name="de Jong P.J."/>
            <person name="Joseph S.S."/>
            <person name="Keenan S."/>
            <person name="Kelly S."/>
            <person name="Kershaw J.K."/>
            <person name="Khan Z."/>
            <person name="Kioschis P."/>
            <person name="Klages S."/>
            <person name="Knights A.J."/>
            <person name="Kosiura A."/>
            <person name="Kovar-Smith C."/>
            <person name="Laird G.K."/>
            <person name="Langford C."/>
            <person name="Lawlor S."/>
            <person name="Leversha M."/>
            <person name="Lewis L."/>
            <person name="Liu W."/>
            <person name="Lloyd C."/>
            <person name="Lloyd D.M."/>
            <person name="Loulseged H."/>
            <person name="Loveland J.E."/>
            <person name="Lovell J.D."/>
            <person name="Lozado R."/>
            <person name="Lu J."/>
            <person name="Lyne R."/>
            <person name="Ma J."/>
            <person name="Maheshwari M."/>
            <person name="Matthews L.H."/>
            <person name="McDowall J."/>
            <person name="McLaren S."/>
            <person name="McMurray A."/>
            <person name="Meidl P."/>
            <person name="Meitinger T."/>
            <person name="Milne S."/>
            <person name="Miner G."/>
            <person name="Mistry S.L."/>
            <person name="Morgan M."/>
            <person name="Morris S."/>
            <person name="Mueller I."/>
            <person name="Mullikin J.C."/>
            <person name="Nguyen N."/>
            <person name="Nordsiek G."/>
            <person name="Nyakatura G."/>
            <person name="O'dell C.N."/>
            <person name="Okwuonu G."/>
            <person name="Palmer S."/>
            <person name="Pandian R."/>
            <person name="Parker D."/>
            <person name="Parrish J."/>
            <person name="Pasternak S."/>
            <person name="Patel D."/>
            <person name="Pearce A.V."/>
            <person name="Pearson D.M."/>
            <person name="Pelan S.E."/>
            <person name="Perez L."/>
            <person name="Porter K.M."/>
            <person name="Ramsey Y."/>
            <person name="Reichwald K."/>
            <person name="Rhodes S."/>
            <person name="Ridler K.A."/>
            <person name="Schlessinger D."/>
            <person name="Schueler M.G."/>
            <person name="Sehra H.K."/>
            <person name="Shaw-Smith C."/>
            <person name="Shen H."/>
            <person name="Sheridan E.M."/>
            <person name="Shownkeen R."/>
            <person name="Skuce C.D."/>
            <person name="Smith M.L."/>
            <person name="Sotheran E.C."/>
            <person name="Steingruber H.E."/>
            <person name="Steward C.A."/>
            <person name="Storey R."/>
            <person name="Swann R.M."/>
            <person name="Swarbreck D."/>
            <person name="Tabor P.E."/>
            <person name="Taudien S."/>
            <person name="Taylor T."/>
            <person name="Teague B."/>
            <person name="Thomas K."/>
            <person name="Thorpe A."/>
            <person name="Timms K."/>
            <person name="Tracey A."/>
            <person name="Trevanion S."/>
            <person name="Tromans A.C."/>
            <person name="d'Urso M."/>
            <person name="Verduzco D."/>
            <person name="Villasana D."/>
            <person name="Waldron L."/>
            <person name="Wall M."/>
            <person name="Wang Q."/>
            <person name="Warren J."/>
            <person name="Warry G.L."/>
            <person name="Wei X."/>
            <person name="West A."/>
            <person name="Whitehead S.L."/>
            <person name="Whiteley M.N."/>
            <person name="Wilkinson J.E."/>
            <person name="Willey D.L."/>
            <person name="Williams G."/>
            <person name="Williams L."/>
            <person name="Williamson A."/>
            <person name="Williamson H."/>
            <person name="Wilming L."/>
            <person name="Woodmansey R.L."/>
            <person name="Wray P.W."/>
            <person name="Yen J."/>
            <person name="Zhang J."/>
            <person name="Zhou J."/>
            <person name="Zoghbi H."/>
            <person name="Zorilla S."/>
            <person name="Buck D."/>
            <person name="Reinhardt R."/>
            <person name="Poustka A."/>
            <person name="Rosenthal A."/>
            <person name="Lehrach H."/>
            <person name="Meindl A."/>
            <person name="Minx P.J."/>
            <person name="Hillier L.W."/>
            <person name="Willard H.F."/>
            <person name="Wilson R.K."/>
            <person name="Waterston R.H."/>
            <person name="Rice C.M."/>
            <person name="Vaudin M."/>
            <person name="Coulson A."/>
            <person name="Nelson D.L."/>
            <person name="Weinstock G."/>
            <person name="Sulston J.E."/>
            <person name="Durbin R.M."/>
            <person name="Hubbard T."/>
            <person name="Gibbs R.A."/>
            <person name="Beck S."/>
            <person name="Rogers J."/>
            <person name="Bentley D.R."/>
        </authorList>
    </citation>
    <scope>NUCLEOTIDE SEQUENCE [LARGE SCALE GENOMIC DNA]</scope>
</reference>
<reference key="7">
    <citation type="journal article" date="2004" name="Genome Res.">
        <title>The status, quality, and expansion of the NIH full-length cDNA project: the Mammalian Gene Collection (MGC).</title>
        <authorList>
            <consortium name="The MGC Project Team"/>
        </authorList>
    </citation>
    <scope>NUCLEOTIDE SEQUENCE [LARGE SCALE MRNA] (ISOFORM 1)</scope>
    <source>
        <tissue>Brain</tissue>
    </source>
</reference>
<reference key="8">
    <citation type="journal article" date="2000" name="Nucleic Acids Res.">
        <title>Human Kruppel-like factor 8: a CACCC-box binding protein that associates with CtBP and represses transcription.</title>
        <authorList>
            <person name="van Vliet J."/>
            <person name="Turner J."/>
            <person name="Crossley M."/>
        </authorList>
    </citation>
    <scope>FUNCTION</scope>
    <scope>SUBUNIT</scope>
    <scope>TISSUE SPECIFICITY</scope>
</reference>
<reference key="9">
    <citation type="journal article" date="2003" name="Mol. Cell">
        <title>Identification of transcription factor KLF8 as a downstream target of focal adhesion kinase in its regulation of cyclin D1 and cell cycle progression.</title>
        <authorList>
            <person name="Zhao J."/>
            <person name="Bian Z.C."/>
            <person name="Yee K."/>
            <person name="Chen B.P."/>
            <person name="Chien S."/>
            <person name="Guan J.L."/>
        </authorList>
    </citation>
    <scope>FUNCTION</scope>
</reference>
<reference key="10">
    <citation type="journal article" date="2006" name="J. Biol. Chem.">
        <title>Sumoylation delimits KLF8 transcriptional activity associated with the cell cycle regulation.</title>
        <authorList>
            <person name="Wei H."/>
            <person name="Wang X."/>
            <person name="Gan B."/>
            <person name="Urvalek A.M."/>
            <person name="Melkoumian Z.K."/>
            <person name="Guan J.-L."/>
            <person name="Zhao J."/>
        </authorList>
    </citation>
    <scope>SUMOYLATION AT LYS-67</scope>
    <scope>INTERACTION WITH PIAS1; PIAS2 AND PIAS4</scope>
    <scope>FUNCTION</scope>
    <scope>SUBCELLULAR LOCATION</scope>
    <scope>MUTAGENESIS OF LYS-67 AND LYS-217</scope>
</reference>
<reference key="11">
    <citation type="journal article" date="2020" name="Cell. Mol. Life Sci.">
        <title>The evolution of the 9aaTAD domain in Sp2 proteins: inactivation with valines and intron reservoirs.</title>
        <authorList>
            <person name="Piskacek M."/>
            <person name="Havelka M."/>
            <person name="Jendruchova K."/>
            <person name="Knight A."/>
            <person name="Keegan L.P."/>
        </authorList>
    </citation>
    <scope>INACTIVATION OF 9AATAD MOTIF</scope>
</reference>
<evidence type="ECO:0000255" key="1">
    <source>
        <dbReference type="PROSITE-ProRule" id="PRU00042"/>
    </source>
</evidence>
<evidence type="ECO:0000256" key="2">
    <source>
        <dbReference type="SAM" id="MobiDB-lite"/>
    </source>
</evidence>
<evidence type="ECO:0000269" key="3">
    <source>
    </source>
</evidence>
<evidence type="ECO:0000269" key="4">
    <source>
    </source>
</evidence>
<evidence type="ECO:0000269" key="5">
    <source>
    </source>
</evidence>
<evidence type="ECO:0000269" key="6">
    <source>
    </source>
</evidence>
<evidence type="ECO:0000303" key="7">
    <source>
    </source>
</evidence>
<evidence type="ECO:0000303" key="8">
    <source>
    </source>
</evidence>
<evidence type="ECO:0000305" key="9"/>
<proteinExistence type="evidence at protein level"/>
<protein>
    <recommendedName>
        <fullName>Krueppel-like factor 8</fullName>
    </recommendedName>
    <alternativeName>
        <fullName>Basic krueppel-like factor 3</fullName>
    </alternativeName>
    <alternativeName>
        <fullName>Zinc finger protein 741</fullName>
    </alternativeName>
</protein>
<feature type="chain" id="PRO_0000047176" description="Krueppel-like factor 8">
    <location>
        <begin position="1"/>
        <end position="359"/>
    </location>
</feature>
<feature type="zinc finger region" description="C2H2-type 1" evidence="1">
    <location>
        <begin position="274"/>
        <end position="298"/>
    </location>
</feature>
<feature type="zinc finger region" description="C2H2-type 2" evidence="1">
    <location>
        <begin position="304"/>
        <end position="328"/>
    </location>
</feature>
<feature type="zinc finger region" description="C2H2-type 3" evidence="1">
    <location>
        <begin position="334"/>
        <end position="356"/>
    </location>
</feature>
<feature type="region of interest" description="Disordered" evidence="2">
    <location>
        <begin position="216"/>
        <end position="235"/>
    </location>
</feature>
<feature type="short sequence motif" description="9aaTAD; inactive" evidence="6">
    <location>
        <begin position="85"/>
        <end position="93"/>
    </location>
</feature>
<feature type="cross-link" description="Glycyl lysine isopeptide (Lys-Gly) (interchain with G-Cter in SUMO)">
    <location>
        <position position="67"/>
    </location>
</feature>
<feature type="splice variant" id="VSP_047480" description="In isoform 3." evidence="8">
    <original>MVDMDKLINNLEVQLNSEGGSMQVFKQ</original>
    <variation>MSLPEDGMSSGHFRSPQLVTWS</variation>
    <location>
        <begin position="1"/>
        <end position="27"/>
    </location>
</feature>
<feature type="splice variant" id="VSP_047481" description="In isoform 4." evidence="8">
    <location>
        <begin position="216"/>
        <end position="299"/>
    </location>
</feature>
<feature type="splice variant" id="VSP_045460" description="In isoform 2 and isoform 3." evidence="7 8">
    <original>PAAMAQMQGEESLDLKRRRIHQCDFAGCSKVYTKSSHLKAHRRIHTGEKPYKCTWDGCSWKFARSDELTRHFRKHTGIKPFRCTDCNRSFSRSDHLSLHRRRHDTM</original>
    <variation>REAL</variation>
    <location>
        <begin position="254"/>
        <end position="359"/>
    </location>
</feature>
<feature type="mutagenesis site" description="Abolishes sumoylation. No change in nuclear location. Increases transcriptional activity and cell cycle progression. Abolishes sumoylation; when associated with R-217." evidence="5">
    <original>K</original>
    <variation>R</variation>
    <location>
        <position position="67"/>
    </location>
</feature>
<feature type="mutagenesis site" description="No change in sumoylation. Abolishes sumoylation; when associated with R-67." evidence="5">
    <original>K</original>
    <variation>R</variation>
    <location>
        <position position="217"/>
    </location>
</feature>
<feature type="sequence conflict" description="In Ref. 3; BAG58895." evidence="9" ref="3">
    <original>S</original>
    <variation>I</variation>
    <location>
        <position position="167"/>
    </location>
</feature>
<feature type="sequence conflict" description="In Ref. 1; AAC99849." evidence="9" ref="1">
    <original>E</original>
    <variation>G</variation>
    <location>
        <position position="263"/>
    </location>
</feature>
<dbReference type="EMBL" id="U28282">
    <property type="protein sequence ID" value="AAC99849.1"/>
    <property type="molecule type" value="mRNA"/>
</dbReference>
<dbReference type="EMBL" id="HF546207">
    <property type="protein sequence ID" value="CCO02793.1"/>
    <property type="molecule type" value="mRNA"/>
</dbReference>
<dbReference type="EMBL" id="HF546208">
    <property type="protein sequence ID" value="CCO02794.1"/>
    <property type="molecule type" value="mRNA"/>
</dbReference>
<dbReference type="EMBL" id="HF546209">
    <property type="protein sequence ID" value="CCO02795.1"/>
    <property type="molecule type" value="mRNA"/>
</dbReference>
<dbReference type="EMBL" id="AK296156">
    <property type="protein sequence ID" value="BAG58895.1"/>
    <property type="molecule type" value="mRNA"/>
</dbReference>
<dbReference type="EMBL" id="AB209004">
    <property type="protein sequence ID" value="BAD92241.1"/>
    <property type="status" value="ALT_SEQ"/>
    <property type="molecule type" value="mRNA"/>
</dbReference>
<dbReference type="EMBL" id="BX641066">
    <property type="protein sequence ID" value="CAE46033.1"/>
    <property type="status" value="ALT_SEQ"/>
    <property type="molecule type" value="mRNA"/>
</dbReference>
<dbReference type="EMBL" id="AL050309">
    <property type="status" value="NOT_ANNOTATED_CDS"/>
    <property type="molecule type" value="Genomic_DNA"/>
</dbReference>
<dbReference type="EMBL" id="BX322609">
    <property type="status" value="NOT_ANNOTATED_CDS"/>
    <property type="molecule type" value="Genomic_DNA"/>
</dbReference>
<dbReference type="EMBL" id="BC105130">
    <property type="protein sequence ID" value="AAI05131.1"/>
    <property type="molecule type" value="mRNA"/>
</dbReference>
<dbReference type="EMBL" id="BC112109">
    <property type="protein sequence ID" value="AAI12110.1"/>
    <property type="molecule type" value="mRNA"/>
</dbReference>
<dbReference type="CCDS" id="CCDS14373.1">
    <molecule id="O95600-1"/>
</dbReference>
<dbReference type="CCDS" id="CCDS55428.1">
    <molecule id="O95600-3"/>
</dbReference>
<dbReference type="CCDS" id="CCDS87749.1">
    <molecule id="O95600-4"/>
</dbReference>
<dbReference type="RefSeq" id="NP_001152768.1">
    <molecule id="O95600-3"/>
    <property type="nucleotide sequence ID" value="NM_001159296.2"/>
</dbReference>
<dbReference type="RefSeq" id="NP_001311028.1">
    <molecule id="O95600-4"/>
    <property type="nucleotide sequence ID" value="NM_001324099.1"/>
</dbReference>
<dbReference type="RefSeq" id="NP_001311029.1">
    <molecule id="O95600-5"/>
    <property type="nucleotide sequence ID" value="NM_001324100.1"/>
</dbReference>
<dbReference type="RefSeq" id="NP_001311031.1">
    <molecule id="O95600-1"/>
    <property type="nucleotide sequence ID" value="NM_001324102.1"/>
</dbReference>
<dbReference type="RefSeq" id="NP_009181.2">
    <molecule id="O95600-1"/>
    <property type="nucleotide sequence ID" value="NM_007250.5"/>
</dbReference>
<dbReference type="RefSeq" id="XP_005262034.1">
    <property type="nucleotide sequence ID" value="XM_005261977.2"/>
</dbReference>
<dbReference type="RefSeq" id="XP_005262036.1">
    <property type="nucleotide sequence ID" value="XM_005261979.3"/>
</dbReference>
<dbReference type="RefSeq" id="XP_006724638.1">
    <molecule id="O95600-3"/>
    <property type="nucleotide sequence ID" value="XM_006724575.3"/>
</dbReference>
<dbReference type="RefSeq" id="XP_047297751.1">
    <molecule id="O95600-1"/>
    <property type="nucleotide sequence ID" value="XM_047441795.1"/>
</dbReference>
<dbReference type="RefSeq" id="XP_047297752.1">
    <molecule id="O95600-1"/>
    <property type="nucleotide sequence ID" value="XM_047441796.1"/>
</dbReference>
<dbReference type="RefSeq" id="XP_047297753.1">
    <molecule id="O95600-1"/>
    <property type="nucleotide sequence ID" value="XM_047441797.1"/>
</dbReference>
<dbReference type="RefSeq" id="XP_047297754.1">
    <molecule id="O95600-1"/>
    <property type="nucleotide sequence ID" value="XM_047441798.1"/>
</dbReference>
<dbReference type="RefSeq" id="XP_047297755.1">
    <molecule id="O95600-1"/>
    <property type="nucleotide sequence ID" value="XM_047441799.1"/>
</dbReference>
<dbReference type="RefSeq" id="XP_054182385.1">
    <molecule id="O95600-1"/>
    <property type="nucleotide sequence ID" value="XM_054326410.1"/>
</dbReference>
<dbReference type="RefSeq" id="XP_054182386.1">
    <molecule id="O95600-1"/>
    <property type="nucleotide sequence ID" value="XM_054326411.1"/>
</dbReference>
<dbReference type="RefSeq" id="XP_054182387.1">
    <molecule id="O95600-1"/>
    <property type="nucleotide sequence ID" value="XM_054326412.1"/>
</dbReference>
<dbReference type="RefSeq" id="XP_054182388.1">
    <molecule id="O95600-1"/>
    <property type="nucleotide sequence ID" value="XM_054326413.1"/>
</dbReference>
<dbReference type="RefSeq" id="XP_054182389.1">
    <molecule id="O95600-1"/>
    <property type="nucleotide sequence ID" value="XM_054326414.1"/>
</dbReference>
<dbReference type="RefSeq" id="XP_054182394.1">
    <molecule id="O95600-3"/>
    <property type="nucleotide sequence ID" value="XM_054326419.1"/>
</dbReference>
<dbReference type="SMR" id="O95600"/>
<dbReference type="BioGRID" id="116435">
    <property type="interactions" value="327"/>
</dbReference>
<dbReference type="ELM" id="O95600"/>
<dbReference type="FunCoup" id="O95600">
    <property type="interactions" value="166"/>
</dbReference>
<dbReference type="IntAct" id="O95600">
    <property type="interactions" value="317"/>
</dbReference>
<dbReference type="MINT" id="O95600"/>
<dbReference type="STRING" id="9606.ENSP00000417303"/>
<dbReference type="GlyGen" id="O95600">
    <property type="glycosylation" value="1 site, 1 O-linked glycan (1 site)"/>
</dbReference>
<dbReference type="iPTMnet" id="O95600"/>
<dbReference type="PhosphoSitePlus" id="O95600"/>
<dbReference type="BioMuta" id="KLF8"/>
<dbReference type="jPOST" id="O95600"/>
<dbReference type="MassIVE" id="O95600"/>
<dbReference type="PaxDb" id="9606-ENSP00000417303"/>
<dbReference type="PeptideAtlas" id="O95600"/>
<dbReference type="ProteomicsDB" id="17622"/>
<dbReference type="ProteomicsDB" id="50947">
    <molecule id="O95600-1"/>
</dbReference>
<dbReference type="Antibodypedia" id="13002">
    <property type="antibodies" value="220 antibodies from 31 providers"/>
</dbReference>
<dbReference type="DNASU" id="11279"/>
<dbReference type="Ensembl" id="ENST00000374928.7">
    <molecule id="O95600-3"/>
    <property type="protein sequence ID" value="ENSP00000364063.3"/>
    <property type="gene ID" value="ENSG00000102349.18"/>
</dbReference>
<dbReference type="Ensembl" id="ENST00000468660.6">
    <molecule id="O95600-1"/>
    <property type="protein sequence ID" value="ENSP00000417303.1"/>
    <property type="gene ID" value="ENSG00000102349.18"/>
</dbReference>
<dbReference type="Ensembl" id="ENST00000640927.1">
    <molecule id="O95600-4"/>
    <property type="protein sequence ID" value="ENSP00000492126.1"/>
    <property type="gene ID" value="ENSG00000102349.18"/>
</dbReference>
<dbReference type="GeneID" id="11279"/>
<dbReference type="KEGG" id="hsa:11279"/>
<dbReference type="MANE-Select" id="ENST00000468660.6">
    <property type="protein sequence ID" value="ENSP00000417303.1"/>
    <property type="RefSeq nucleotide sequence ID" value="NM_007250.5"/>
    <property type="RefSeq protein sequence ID" value="NP_009181.2"/>
</dbReference>
<dbReference type="UCSC" id="uc004dur.4">
    <molecule id="O95600-1"/>
    <property type="organism name" value="human"/>
</dbReference>
<dbReference type="AGR" id="HGNC:6351"/>
<dbReference type="CTD" id="11279"/>
<dbReference type="DisGeNET" id="11279"/>
<dbReference type="GeneCards" id="KLF8"/>
<dbReference type="HGNC" id="HGNC:6351">
    <property type="gene designation" value="KLF8"/>
</dbReference>
<dbReference type="HPA" id="ENSG00000102349">
    <property type="expression patterns" value="Tissue enhanced (skin)"/>
</dbReference>
<dbReference type="MalaCards" id="KLF8"/>
<dbReference type="MIM" id="300286">
    <property type="type" value="gene"/>
</dbReference>
<dbReference type="neXtProt" id="NX_O95600"/>
<dbReference type="OpenTargets" id="ENSG00000102349"/>
<dbReference type="PharmGKB" id="PA30141"/>
<dbReference type="VEuPathDB" id="HostDB:ENSG00000102349"/>
<dbReference type="eggNOG" id="KOG1721">
    <property type="taxonomic scope" value="Eukaryota"/>
</dbReference>
<dbReference type="GeneTree" id="ENSGT00940000161062"/>
<dbReference type="HOGENOM" id="CLU_002678_33_0_1"/>
<dbReference type="InParanoid" id="O95600"/>
<dbReference type="OMA" id="KMTSPPF"/>
<dbReference type="OrthoDB" id="4748970at2759"/>
<dbReference type="PAN-GO" id="O95600">
    <property type="GO annotations" value="3 GO annotations based on evolutionary models"/>
</dbReference>
<dbReference type="PhylomeDB" id="O95600"/>
<dbReference type="TreeFam" id="TF350556"/>
<dbReference type="PathwayCommons" id="O95600"/>
<dbReference type="SignaLink" id="O95600"/>
<dbReference type="SIGNOR" id="O95600"/>
<dbReference type="BioGRID-ORCS" id="11279">
    <property type="hits" value="7 hits in 793 CRISPR screens"/>
</dbReference>
<dbReference type="ChiTaRS" id="KLF8">
    <property type="organism name" value="human"/>
</dbReference>
<dbReference type="GeneWiki" id="KLF8"/>
<dbReference type="GenomeRNAi" id="11279"/>
<dbReference type="Pharos" id="O95600">
    <property type="development level" value="Tbio"/>
</dbReference>
<dbReference type="PRO" id="PR:O95600"/>
<dbReference type="Proteomes" id="UP000005640">
    <property type="component" value="Chromosome X"/>
</dbReference>
<dbReference type="RNAct" id="O95600">
    <property type="molecule type" value="protein"/>
</dbReference>
<dbReference type="Bgee" id="ENSG00000102349">
    <property type="expression patterns" value="Expressed in esophagus squamous epithelium and 163 other cell types or tissues"/>
</dbReference>
<dbReference type="ExpressionAtlas" id="O95600">
    <property type="expression patterns" value="baseline and differential"/>
</dbReference>
<dbReference type="GO" id="GO:0016235">
    <property type="term" value="C:aggresome"/>
    <property type="evidence" value="ECO:0000314"/>
    <property type="project" value="HPA"/>
</dbReference>
<dbReference type="GO" id="GO:0000785">
    <property type="term" value="C:chromatin"/>
    <property type="evidence" value="ECO:0000247"/>
    <property type="project" value="NTNU_SB"/>
</dbReference>
<dbReference type="GO" id="GO:0005829">
    <property type="term" value="C:cytosol"/>
    <property type="evidence" value="ECO:0000314"/>
    <property type="project" value="HPA"/>
</dbReference>
<dbReference type="GO" id="GO:0005654">
    <property type="term" value="C:nucleoplasm"/>
    <property type="evidence" value="ECO:0000314"/>
    <property type="project" value="HPA"/>
</dbReference>
<dbReference type="GO" id="GO:0000981">
    <property type="term" value="F:DNA-binding transcription factor activity, RNA polymerase II-specific"/>
    <property type="evidence" value="ECO:0000247"/>
    <property type="project" value="NTNU_SB"/>
</dbReference>
<dbReference type="GO" id="GO:0001227">
    <property type="term" value="F:DNA-binding transcription repressor activity, RNA polymerase II-specific"/>
    <property type="evidence" value="ECO:0000314"/>
    <property type="project" value="NTNU_SB"/>
</dbReference>
<dbReference type="GO" id="GO:0000978">
    <property type="term" value="F:RNA polymerase II cis-regulatory region sequence-specific DNA binding"/>
    <property type="evidence" value="ECO:0000314"/>
    <property type="project" value="NTNU_SB"/>
</dbReference>
<dbReference type="GO" id="GO:0008270">
    <property type="term" value="F:zinc ion binding"/>
    <property type="evidence" value="ECO:0007669"/>
    <property type="project" value="UniProtKB-KW"/>
</dbReference>
<dbReference type="GO" id="GO:0000122">
    <property type="term" value="P:negative regulation of transcription by RNA polymerase II"/>
    <property type="evidence" value="ECO:0000315"/>
    <property type="project" value="NTNU_SB"/>
</dbReference>
<dbReference type="GO" id="GO:0006357">
    <property type="term" value="P:regulation of transcription by RNA polymerase II"/>
    <property type="evidence" value="ECO:0000318"/>
    <property type="project" value="GO_Central"/>
</dbReference>
<dbReference type="CDD" id="cd21440">
    <property type="entry name" value="KLF8_N"/>
    <property type="match status" value="1"/>
</dbReference>
<dbReference type="FunFam" id="3.30.160.60:FF:000021">
    <property type="entry name" value="Basic krueppel-like factor 3"/>
    <property type="match status" value="1"/>
</dbReference>
<dbReference type="FunFam" id="3.30.160.60:FF:000018">
    <property type="entry name" value="Krueppel-like factor 15"/>
    <property type="match status" value="1"/>
</dbReference>
<dbReference type="FunFam" id="3.30.160.60:FF:000563">
    <property type="entry name" value="Krueppel-like factor 8"/>
    <property type="match status" value="1"/>
</dbReference>
<dbReference type="Gene3D" id="3.30.160.60">
    <property type="entry name" value="Classic Zinc Finger"/>
    <property type="match status" value="3"/>
</dbReference>
<dbReference type="InterPro" id="IPR036236">
    <property type="entry name" value="Znf_C2H2_sf"/>
</dbReference>
<dbReference type="InterPro" id="IPR013087">
    <property type="entry name" value="Znf_C2H2_type"/>
</dbReference>
<dbReference type="PANTHER" id="PTHR23235:SF46">
    <property type="entry name" value="KRUEPPEL-LIKE FACTOR 8"/>
    <property type="match status" value="1"/>
</dbReference>
<dbReference type="PANTHER" id="PTHR23235">
    <property type="entry name" value="KRUEPPEL-LIKE TRANSCRIPTION FACTOR"/>
    <property type="match status" value="1"/>
</dbReference>
<dbReference type="Pfam" id="PF00096">
    <property type="entry name" value="zf-C2H2"/>
    <property type="match status" value="3"/>
</dbReference>
<dbReference type="SMART" id="SM00355">
    <property type="entry name" value="ZnF_C2H2"/>
    <property type="match status" value="3"/>
</dbReference>
<dbReference type="SUPFAM" id="SSF57667">
    <property type="entry name" value="beta-beta-alpha zinc fingers"/>
    <property type="match status" value="2"/>
</dbReference>
<dbReference type="PROSITE" id="PS00028">
    <property type="entry name" value="ZINC_FINGER_C2H2_1"/>
    <property type="match status" value="3"/>
</dbReference>
<dbReference type="PROSITE" id="PS50157">
    <property type="entry name" value="ZINC_FINGER_C2H2_2"/>
    <property type="match status" value="3"/>
</dbReference>